<organism>
    <name type="scientific">Pseudoalteromonas translucida (strain TAC 125)</name>
    <dbReference type="NCBI Taxonomy" id="326442"/>
    <lineage>
        <taxon>Bacteria</taxon>
        <taxon>Pseudomonadati</taxon>
        <taxon>Pseudomonadota</taxon>
        <taxon>Gammaproteobacteria</taxon>
        <taxon>Alteromonadales</taxon>
        <taxon>Pseudoalteromonadaceae</taxon>
        <taxon>Pseudoalteromonas</taxon>
    </lineage>
</organism>
<sequence>MSLQDPIADLFTRIRNGQSAKKVSVTMPNSKLKVAVAKVLKNEGYIADFAINGDVKPELSIELKYFEGKAVIENIQRVSRPGLRIYKRRDELPKVMGGLGIAIVSTSKGLMTDRAARSAGVGGEIIGFVA</sequence>
<gene>
    <name evidence="1" type="primary">rpsH</name>
    <name type="ordered locus">PSHAa2816</name>
</gene>
<dbReference type="EMBL" id="CR954246">
    <property type="protein sequence ID" value="CAI87853.1"/>
    <property type="molecule type" value="Genomic_DNA"/>
</dbReference>
<dbReference type="SMR" id="Q3IJJ9"/>
<dbReference type="STRING" id="326442.PSHAa2816"/>
<dbReference type="KEGG" id="pha:PSHAa2816"/>
<dbReference type="PATRIC" id="fig|326442.8.peg.2715"/>
<dbReference type="eggNOG" id="COG0096">
    <property type="taxonomic scope" value="Bacteria"/>
</dbReference>
<dbReference type="HOGENOM" id="CLU_098428_0_0_6"/>
<dbReference type="BioCyc" id="PHAL326442:PSHA_RS13825-MONOMER"/>
<dbReference type="Proteomes" id="UP000006843">
    <property type="component" value="Chromosome I"/>
</dbReference>
<dbReference type="GO" id="GO:1990904">
    <property type="term" value="C:ribonucleoprotein complex"/>
    <property type="evidence" value="ECO:0007669"/>
    <property type="project" value="UniProtKB-KW"/>
</dbReference>
<dbReference type="GO" id="GO:0005840">
    <property type="term" value="C:ribosome"/>
    <property type="evidence" value="ECO:0007669"/>
    <property type="project" value="UniProtKB-KW"/>
</dbReference>
<dbReference type="GO" id="GO:0019843">
    <property type="term" value="F:rRNA binding"/>
    <property type="evidence" value="ECO:0007669"/>
    <property type="project" value="UniProtKB-UniRule"/>
</dbReference>
<dbReference type="GO" id="GO:0003735">
    <property type="term" value="F:structural constituent of ribosome"/>
    <property type="evidence" value="ECO:0007669"/>
    <property type="project" value="InterPro"/>
</dbReference>
<dbReference type="GO" id="GO:0006412">
    <property type="term" value="P:translation"/>
    <property type="evidence" value="ECO:0007669"/>
    <property type="project" value="UniProtKB-UniRule"/>
</dbReference>
<dbReference type="FunFam" id="3.30.1370.30:FF:000003">
    <property type="entry name" value="30S ribosomal protein S8"/>
    <property type="match status" value="1"/>
</dbReference>
<dbReference type="FunFam" id="3.30.1490.10:FF:000001">
    <property type="entry name" value="30S ribosomal protein S8"/>
    <property type="match status" value="1"/>
</dbReference>
<dbReference type="Gene3D" id="3.30.1370.30">
    <property type="match status" value="1"/>
</dbReference>
<dbReference type="Gene3D" id="3.30.1490.10">
    <property type="match status" value="1"/>
</dbReference>
<dbReference type="HAMAP" id="MF_01302_B">
    <property type="entry name" value="Ribosomal_uS8_B"/>
    <property type="match status" value="1"/>
</dbReference>
<dbReference type="InterPro" id="IPR000630">
    <property type="entry name" value="Ribosomal_uS8"/>
</dbReference>
<dbReference type="InterPro" id="IPR047863">
    <property type="entry name" value="Ribosomal_uS8_CS"/>
</dbReference>
<dbReference type="InterPro" id="IPR035987">
    <property type="entry name" value="Ribosomal_uS8_sf"/>
</dbReference>
<dbReference type="NCBIfam" id="NF001109">
    <property type="entry name" value="PRK00136.1"/>
    <property type="match status" value="1"/>
</dbReference>
<dbReference type="PANTHER" id="PTHR11758">
    <property type="entry name" value="40S RIBOSOMAL PROTEIN S15A"/>
    <property type="match status" value="1"/>
</dbReference>
<dbReference type="Pfam" id="PF00410">
    <property type="entry name" value="Ribosomal_S8"/>
    <property type="match status" value="1"/>
</dbReference>
<dbReference type="SUPFAM" id="SSF56047">
    <property type="entry name" value="Ribosomal protein S8"/>
    <property type="match status" value="1"/>
</dbReference>
<dbReference type="PROSITE" id="PS00053">
    <property type="entry name" value="RIBOSOMAL_S8"/>
    <property type="match status" value="1"/>
</dbReference>
<accession>Q3IJJ9</accession>
<evidence type="ECO:0000255" key="1">
    <source>
        <dbReference type="HAMAP-Rule" id="MF_01302"/>
    </source>
</evidence>
<evidence type="ECO:0000305" key="2"/>
<proteinExistence type="inferred from homology"/>
<keyword id="KW-1185">Reference proteome</keyword>
<keyword id="KW-0687">Ribonucleoprotein</keyword>
<keyword id="KW-0689">Ribosomal protein</keyword>
<keyword id="KW-0694">RNA-binding</keyword>
<keyword id="KW-0699">rRNA-binding</keyword>
<feature type="chain" id="PRO_0000225881" description="Small ribosomal subunit protein uS8">
    <location>
        <begin position="1"/>
        <end position="130"/>
    </location>
</feature>
<protein>
    <recommendedName>
        <fullName evidence="1">Small ribosomal subunit protein uS8</fullName>
    </recommendedName>
    <alternativeName>
        <fullName evidence="2">30S ribosomal protein S8</fullName>
    </alternativeName>
</protein>
<name>RS8_PSET1</name>
<reference key="1">
    <citation type="journal article" date="2005" name="Genome Res.">
        <title>Coping with cold: the genome of the versatile marine Antarctica bacterium Pseudoalteromonas haloplanktis TAC125.</title>
        <authorList>
            <person name="Medigue C."/>
            <person name="Krin E."/>
            <person name="Pascal G."/>
            <person name="Barbe V."/>
            <person name="Bernsel A."/>
            <person name="Bertin P.N."/>
            <person name="Cheung F."/>
            <person name="Cruveiller S."/>
            <person name="D'Amico S."/>
            <person name="Duilio A."/>
            <person name="Fang G."/>
            <person name="Feller G."/>
            <person name="Ho C."/>
            <person name="Mangenot S."/>
            <person name="Marino G."/>
            <person name="Nilsson J."/>
            <person name="Parrilli E."/>
            <person name="Rocha E.P.C."/>
            <person name="Rouy Z."/>
            <person name="Sekowska A."/>
            <person name="Tutino M.L."/>
            <person name="Vallenet D."/>
            <person name="von Heijne G."/>
            <person name="Danchin A."/>
        </authorList>
    </citation>
    <scope>NUCLEOTIDE SEQUENCE [LARGE SCALE GENOMIC DNA]</scope>
    <source>
        <strain>TAC 125</strain>
    </source>
</reference>
<comment type="function">
    <text evidence="1">One of the primary rRNA binding proteins, it binds directly to 16S rRNA central domain where it helps coordinate assembly of the platform of the 30S subunit.</text>
</comment>
<comment type="subunit">
    <text evidence="1">Part of the 30S ribosomal subunit. Contacts proteins S5 and S12.</text>
</comment>
<comment type="similarity">
    <text evidence="1">Belongs to the universal ribosomal protein uS8 family.</text>
</comment>